<proteinExistence type="evidence at protein level"/>
<comment type="function">
    <text evidence="2 3 7 8">Adenine nucleotide transporter involved in the uniport of ATP and adenine nucleotide hetero-exchange transport between the cytosol and the peroxisomal lumen. This transport is accompanied by a proton transport from the peroxisomal lumen to the cytosol. Transport of ATP into the peroxisome is required for beta-oxidation of medium-chain fatty acids. Required for growth on medium-chain fatty acids, pH gradient formation in peroxisomes and for normal peroxisome proliferation.</text>
</comment>
<comment type="subcellular location">
    <subcellularLocation>
        <location evidence="2 3 5">Peroxisome membrane</location>
        <topology evidence="2 3 5">Multi-pass membrane protein</topology>
    </subcellularLocation>
</comment>
<comment type="induction">
    <text evidence="4">Induced by oleic acid, through its ORE-like (oleate responsive element) promoter element and the PIP2-OAF1 transcription factors.</text>
</comment>
<comment type="miscellaneous">
    <text evidence="6">Present with 2250 molecules/cell in log phase SD medium.</text>
</comment>
<comment type="similarity">
    <text evidence="9">Belongs to the mitochondrial carrier (TC 2.A.29) family.</text>
</comment>
<evidence type="ECO:0000255" key="1"/>
<evidence type="ECO:0000269" key="2">
    <source>
    </source>
</evidence>
<evidence type="ECO:0000269" key="3">
    <source>
    </source>
</evidence>
<evidence type="ECO:0000269" key="4">
    <source>
    </source>
</evidence>
<evidence type="ECO:0000269" key="5">
    <source>
    </source>
</evidence>
<evidence type="ECO:0000269" key="6">
    <source>
    </source>
</evidence>
<evidence type="ECO:0000269" key="7">
    <source>
    </source>
</evidence>
<evidence type="ECO:0000269" key="8">
    <source>
    </source>
</evidence>
<evidence type="ECO:0000305" key="9"/>
<reference key="1">
    <citation type="journal article" date="1997" name="Nature">
        <title>The nucleotide sequence of Saccharomyces cerevisiae chromosome XVI.</title>
        <authorList>
            <person name="Bussey H."/>
            <person name="Storms R.K."/>
            <person name="Ahmed A."/>
            <person name="Albermann K."/>
            <person name="Allen E."/>
            <person name="Ansorge W."/>
            <person name="Araujo R."/>
            <person name="Aparicio A."/>
            <person name="Barrell B.G."/>
            <person name="Badcock K."/>
            <person name="Benes V."/>
            <person name="Botstein D."/>
            <person name="Bowman S."/>
            <person name="Brueckner M."/>
            <person name="Carpenter J."/>
            <person name="Cherry J.M."/>
            <person name="Chung E."/>
            <person name="Churcher C.M."/>
            <person name="Coster F."/>
            <person name="Davis K."/>
            <person name="Davis R.W."/>
            <person name="Dietrich F.S."/>
            <person name="Delius H."/>
            <person name="DiPaolo T."/>
            <person name="Dubois E."/>
            <person name="Duesterhoeft A."/>
            <person name="Duncan M."/>
            <person name="Floeth M."/>
            <person name="Fortin N."/>
            <person name="Friesen J.D."/>
            <person name="Fritz C."/>
            <person name="Goffeau A."/>
            <person name="Hall J."/>
            <person name="Hebling U."/>
            <person name="Heumann K."/>
            <person name="Hilbert H."/>
            <person name="Hillier L.W."/>
            <person name="Hunicke-Smith S."/>
            <person name="Hyman R.W."/>
            <person name="Johnston M."/>
            <person name="Kalman S."/>
            <person name="Kleine K."/>
            <person name="Komp C."/>
            <person name="Kurdi O."/>
            <person name="Lashkari D."/>
            <person name="Lew H."/>
            <person name="Lin A."/>
            <person name="Lin D."/>
            <person name="Louis E.J."/>
            <person name="Marathe R."/>
            <person name="Messenguy F."/>
            <person name="Mewes H.-W."/>
            <person name="Mirtipati S."/>
            <person name="Moestl D."/>
            <person name="Mueller-Auer S."/>
            <person name="Namath A."/>
            <person name="Nentwich U."/>
            <person name="Oefner P."/>
            <person name="Pearson D."/>
            <person name="Petel F.X."/>
            <person name="Pohl T.M."/>
            <person name="Purnelle B."/>
            <person name="Rajandream M.A."/>
            <person name="Rechmann S."/>
            <person name="Rieger M."/>
            <person name="Riles L."/>
            <person name="Roberts D."/>
            <person name="Schaefer M."/>
            <person name="Scharfe M."/>
            <person name="Scherens B."/>
            <person name="Schramm S."/>
            <person name="Schroeder M."/>
            <person name="Sdicu A.-M."/>
            <person name="Tettelin H."/>
            <person name="Urrestarazu L.A."/>
            <person name="Ushinsky S."/>
            <person name="Vierendeels F."/>
            <person name="Vissers S."/>
            <person name="Voss H."/>
            <person name="Walsh S.V."/>
            <person name="Wambutt R."/>
            <person name="Wang Y."/>
            <person name="Wedler E."/>
            <person name="Wedler H."/>
            <person name="Winnett E."/>
            <person name="Zhong W.-W."/>
            <person name="Zollner A."/>
            <person name="Vo D.H."/>
            <person name="Hani J."/>
        </authorList>
    </citation>
    <scope>NUCLEOTIDE SEQUENCE [LARGE SCALE GENOMIC DNA]</scope>
    <source>
        <strain>ATCC 204508 / S288c</strain>
    </source>
</reference>
<reference key="2">
    <citation type="journal article" date="2014" name="G3 (Bethesda)">
        <title>The reference genome sequence of Saccharomyces cerevisiae: Then and now.</title>
        <authorList>
            <person name="Engel S.R."/>
            <person name="Dietrich F.S."/>
            <person name="Fisk D.G."/>
            <person name="Binkley G."/>
            <person name="Balakrishnan R."/>
            <person name="Costanzo M.C."/>
            <person name="Dwight S.S."/>
            <person name="Hitz B.C."/>
            <person name="Karra K."/>
            <person name="Nash R.S."/>
            <person name="Weng S."/>
            <person name="Wong E.D."/>
            <person name="Lloyd P."/>
            <person name="Skrzypek M.S."/>
            <person name="Miyasato S.R."/>
            <person name="Simison M."/>
            <person name="Cherry J.M."/>
        </authorList>
    </citation>
    <scope>GENOME REANNOTATION</scope>
    <source>
        <strain>ATCC 204508 / S288c</strain>
    </source>
</reference>
<reference key="3">
    <citation type="journal article" date="2001" name="EMBO J.">
        <title>Identification and functional reconstitution of the yeast peroxisomal adenine nucleotide transporter.</title>
        <authorList>
            <person name="Palmieri L."/>
            <person name="Rottensteiner H."/>
            <person name="Girzalsky W."/>
            <person name="Scarcia P."/>
            <person name="Palmieri F."/>
            <person name="Erdmann R."/>
        </authorList>
    </citation>
    <scope>FUNCTION</scope>
    <scope>SUBCELLULAR LOCATION</scope>
    <scope>IDENTIFICATION BY MASS SPECTROMETRY</scope>
</reference>
<reference key="4">
    <citation type="journal article" date="2001" name="Mol. Cell. Biol.">
        <title>Identification of a peroxisomal ATP carrier required for medium-chain fatty acid beta-oxidation and normal peroxisome proliferation in Saccharomyces cerevisiae.</title>
        <authorList>
            <person name="van Roermund C.W.T."/>
            <person name="Drissen R."/>
            <person name="van Den Berg M."/>
            <person name="Ijlst L."/>
            <person name="Hettema E.H."/>
            <person name="Tabak H.F."/>
            <person name="Waterham H.R."/>
            <person name="Wanders R.J.A."/>
        </authorList>
    </citation>
    <scope>FUNCTION</scope>
    <scope>SUBCELLULAR LOCATION</scope>
</reference>
<reference key="5">
    <citation type="journal article" date="2002" name="Biochem. J.">
        <title>The peroxisomal transporter gene ANT1 is regulated by a deviant oleate response element (ORE): characterization of the signal for fatty acid induction.</title>
        <authorList>
            <person name="Rottensteiner H."/>
            <person name="Palmieri L."/>
            <person name="Hartig A."/>
            <person name="Hamilton B."/>
            <person name="Ruis H."/>
            <person name="Erdmann R."/>
            <person name="Gurvitz A."/>
        </authorList>
    </citation>
    <scope>INDUCTION</scope>
</reference>
<reference key="6">
    <citation type="journal article" date="2003" name="Nature">
        <title>Global analysis of protein localization in budding yeast.</title>
        <authorList>
            <person name="Huh W.-K."/>
            <person name="Falvo J.V."/>
            <person name="Gerke L.C."/>
            <person name="Carroll A.S."/>
            <person name="Howson R.W."/>
            <person name="Weissman J.S."/>
            <person name="O'Shea E.K."/>
        </authorList>
    </citation>
    <scope>SUBCELLULAR LOCATION [LARGE SCALE ANALYSIS]</scope>
</reference>
<reference key="7">
    <citation type="journal article" date="2003" name="Nature">
        <title>Global analysis of protein expression in yeast.</title>
        <authorList>
            <person name="Ghaemmaghami S."/>
            <person name="Huh W.-K."/>
            <person name="Bower K."/>
            <person name="Howson R.W."/>
            <person name="Belle A."/>
            <person name="Dephoure N."/>
            <person name="O'Shea E.K."/>
            <person name="Weissman J.S."/>
        </authorList>
    </citation>
    <scope>LEVEL OF PROTEIN EXPRESSION [LARGE SCALE ANALYSIS]</scope>
</reference>
<reference key="8">
    <citation type="journal article" date="2004" name="Biochem. J.">
        <title>The yeast peroxisomal adenine nucleotide transporter: characterization of two transport modes and involvement in DeltapH formation across peroxisomal membranes.</title>
        <authorList>
            <person name="Lasorsa F.M."/>
            <person name="Scarcia P."/>
            <person name="Erdmann R."/>
            <person name="Palmieri F."/>
            <person name="Rottensteiner H."/>
            <person name="Palmieri L."/>
        </authorList>
    </citation>
    <scope>FUNCTION</scope>
</reference>
<reference key="9">
    <citation type="journal article" date="2004" name="J. Cell Sci.">
        <title>The peroxisomal lumen in Saccharomyces cerevisiae is alkaline.</title>
        <authorList>
            <person name="van Roermund C.W.T."/>
            <person name="de Jong M."/>
            <person name="Ijlst L."/>
            <person name="van Marle J."/>
            <person name="Dansen T.B."/>
            <person name="Wanders R.J.A."/>
            <person name="Waterham H.R."/>
        </authorList>
    </citation>
    <scope>FUNCTION</scope>
</reference>
<accession>Q06497</accession>
<accession>D6W4C5</accession>
<keyword id="KW-0375">Hydrogen ion transport</keyword>
<keyword id="KW-0406">Ion transport</keyword>
<keyword id="KW-0472">Membrane</keyword>
<keyword id="KW-0576">Peroxisome</keyword>
<keyword id="KW-1185">Reference proteome</keyword>
<keyword id="KW-0677">Repeat</keyword>
<keyword id="KW-0812">Transmembrane</keyword>
<keyword id="KW-1133">Transmembrane helix</keyword>
<keyword id="KW-0813">Transport</keyword>
<dbReference type="EMBL" id="U40829">
    <property type="protein sequence ID" value="AAB68270.1"/>
    <property type="molecule type" value="Genomic_DNA"/>
</dbReference>
<dbReference type="EMBL" id="BK006949">
    <property type="protein sequence ID" value="DAA11541.1"/>
    <property type="molecule type" value="Genomic_DNA"/>
</dbReference>
<dbReference type="PIR" id="S69019">
    <property type="entry name" value="S69019"/>
</dbReference>
<dbReference type="RefSeq" id="NP_015453.1">
    <property type="nucleotide sequence ID" value="NM_001184225.1"/>
</dbReference>
<dbReference type="SMR" id="Q06497"/>
<dbReference type="BioGRID" id="36295">
    <property type="interactions" value="102"/>
</dbReference>
<dbReference type="DIP" id="DIP-8825N"/>
<dbReference type="FunCoup" id="Q06497">
    <property type="interactions" value="88"/>
</dbReference>
<dbReference type="IntAct" id="Q06497">
    <property type="interactions" value="2"/>
</dbReference>
<dbReference type="MINT" id="Q06497"/>
<dbReference type="STRING" id="4932.YPR128C"/>
<dbReference type="TCDB" id="2.A.29.17.1">
    <property type="family name" value="the mitochondrial carrier (mc) family"/>
</dbReference>
<dbReference type="GlyGen" id="Q06497">
    <property type="glycosylation" value="1 site"/>
</dbReference>
<dbReference type="iPTMnet" id="Q06497"/>
<dbReference type="PaxDb" id="4932-YPR128C"/>
<dbReference type="PeptideAtlas" id="Q06497"/>
<dbReference type="EnsemblFungi" id="YPR128C_mRNA">
    <property type="protein sequence ID" value="YPR128C"/>
    <property type="gene ID" value="YPR128C"/>
</dbReference>
<dbReference type="GeneID" id="856246"/>
<dbReference type="KEGG" id="sce:YPR128C"/>
<dbReference type="AGR" id="SGD:S000006332"/>
<dbReference type="SGD" id="S000006332">
    <property type="gene designation" value="ANT1"/>
</dbReference>
<dbReference type="VEuPathDB" id="FungiDB:YPR128C"/>
<dbReference type="eggNOG" id="KOG0769">
    <property type="taxonomic scope" value="Eukaryota"/>
</dbReference>
<dbReference type="HOGENOM" id="CLU_015166_6_3_1"/>
<dbReference type="InParanoid" id="Q06497"/>
<dbReference type="OMA" id="PLEMINT"/>
<dbReference type="OrthoDB" id="446044at2759"/>
<dbReference type="BioCyc" id="YEAST:G3O-34265-MONOMER"/>
<dbReference type="BioGRID-ORCS" id="856246">
    <property type="hits" value="1 hit in 10 CRISPR screens"/>
</dbReference>
<dbReference type="PRO" id="PR:Q06497"/>
<dbReference type="Proteomes" id="UP000002311">
    <property type="component" value="Chromosome XVI"/>
</dbReference>
<dbReference type="RNAct" id="Q06497">
    <property type="molecule type" value="protein"/>
</dbReference>
<dbReference type="GO" id="GO:0005737">
    <property type="term" value="C:cytoplasm"/>
    <property type="evidence" value="ECO:0007005"/>
    <property type="project" value="SGD"/>
</dbReference>
<dbReference type="GO" id="GO:0005778">
    <property type="term" value="C:peroxisomal membrane"/>
    <property type="evidence" value="ECO:0000314"/>
    <property type="project" value="SGD"/>
</dbReference>
<dbReference type="GO" id="GO:0000295">
    <property type="term" value="F:adenine nucleotide transmembrane transporter activity"/>
    <property type="evidence" value="ECO:0000314"/>
    <property type="project" value="SGD"/>
</dbReference>
<dbReference type="GO" id="GO:0015217">
    <property type="term" value="F:ADP transmembrane transporter activity"/>
    <property type="evidence" value="ECO:0000318"/>
    <property type="project" value="GO_Central"/>
</dbReference>
<dbReference type="GO" id="GO:0005347">
    <property type="term" value="F:ATP transmembrane transporter activity"/>
    <property type="evidence" value="ECO:0000318"/>
    <property type="project" value="GO_Central"/>
</dbReference>
<dbReference type="GO" id="GO:0015866">
    <property type="term" value="P:ADP transport"/>
    <property type="evidence" value="ECO:0000318"/>
    <property type="project" value="GO_Central"/>
</dbReference>
<dbReference type="GO" id="GO:0015867">
    <property type="term" value="P:ATP transport"/>
    <property type="evidence" value="ECO:0000314"/>
    <property type="project" value="SGD"/>
</dbReference>
<dbReference type="GO" id="GO:0006635">
    <property type="term" value="P:fatty acid beta-oxidation"/>
    <property type="evidence" value="ECO:0000315"/>
    <property type="project" value="SGD"/>
</dbReference>
<dbReference type="GO" id="GO:0007031">
    <property type="term" value="P:peroxisome organization"/>
    <property type="evidence" value="ECO:0000315"/>
    <property type="project" value="SGD"/>
</dbReference>
<dbReference type="GO" id="GO:1902600">
    <property type="term" value="P:proton transmembrane transport"/>
    <property type="evidence" value="ECO:0007669"/>
    <property type="project" value="UniProtKB-KW"/>
</dbReference>
<dbReference type="FunFam" id="1.50.40.10:FF:000135">
    <property type="entry name" value="Adenine nucleotide transporter"/>
    <property type="match status" value="1"/>
</dbReference>
<dbReference type="Gene3D" id="1.50.40.10">
    <property type="entry name" value="Mitochondrial carrier domain"/>
    <property type="match status" value="1"/>
</dbReference>
<dbReference type="InterPro" id="IPR018108">
    <property type="entry name" value="Mitochondrial_sb/sol_carrier"/>
</dbReference>
<dbReference type="InterPro" id="IPR023395">
    <property type="entry name" value="Mt_carrier_dom_sf"/>
</dbReference>
<dbReference type="InterPro" id="IPR045900">
    <property type="entry name" value="Peroxisomal_Ade_carrier"/>
</dbReference>
<dbReference type="PANTHER" id="PTHR46650">
    <property type="entry name" value="PEROXISOMAL ADENINE NUCLEOTIDE TRANSPORTER 1"/>
    <property type="match status" value="1"/>
</dbReference>
<dbReference type="PANTHER" id="PTHR46650:SF1">
    <property type="entry name" value="PEROXISOMAL ADENINE NUCLEOTIDE TRANSPORTER 1"/>
    <property type="match status" value="1"/>
</dbReference>
<dbReference type="Pfam" id="PF00153">
    <property type="entry name" value="Mito_carr"/>
    <property type="match status" value="3"/>
</dbReference>
<dbReference type="SUPFAM" id="SSF103506">
    <property type="entry name" value="Mitochondrial carrier"/>
    <property type="match status" value="1"/>
</dbReference>
<dbReference type="PROSITE" id="PS50920">
    <property type="entry name" value="SOLCAR"/>
    <property type="match status" value="3"/>
</dbReference>
<sequence>MLTLESALTGAVASAMANIAVYPLDLSKTIIQSQVSPSSSEDSNEGKVLPNRRYKNVVDCMINIFKEKGILGLYQGMTVTTVATFVQNFVYFFWYTFIRKSYMKHKLLGLQSLKNRDGPITPSTIEELVLGVAAASISQLFTSPMAVVATRQQTVHSAESAKFTNVIKDIYRENNGDITAFWKGLRTGLALTINPSITYASFQRLKEVFFHDHSNDAGSLSAVQNFILGVLSKMISTLVTQPLIVAKAMLQSAGSKFTTFQEALLYLYKNEGLKSLWKGVLPQLTKGVIVQGLLFAFRGELTKSLKRLIFLYSSFFLKHNGQRKLAST</sequence>
<feature type="chain" id="PRO_0000227603" description="Peroxisomal adenine nucleotide transporter 1">
    <location>
        <begin position="1"/>
        <end position="328"/>
    </location>
</feature>
<feature type="transmembrane region" description="Helical; Name=1" evidence="1">
    <location>
        <begin position="1"/>
        <end position="21"/>
    </location>
</feature>
<feature type="transmembrane region" description="Helical; Name=2" evidence="1">
    <location>
        <begin position="78"/>
        <end position="98"/>
    </location>
</feature>
<feature type="transmembrane region" description="Helical; Name=3" evidence="1">
    <location>
        <begin position="128"/>
        <end position="148"/>
    </location>
</feature>
<feature type="transmembrane region" description="Helical; Name=4" evidence="1">
    <location>
        <begin position="185"/>
        <end position="202"/>
    </location>
</feature>
<feature type="transmembrane region" description="Helical; Name=5" evidence="1">
    <location>
        <begin position="226"/>
        <end position="246"/>
    </location>
</feature>
<feature type="transmembrane region" description="Helical; Name=6" evidence="1">
    <location>
        <begin position="277"/>
        <end position="297"/>
    </location>
</feature>
<feature type="repeat" description="Solcar 1">
    <location>
        <begin position="1"/>
        <end position="101"/>
    </location>
</feature>
<feature type="repeat" description="Solcar 2">
    <location>
        <begin position="122"/>
        <end position="208"/>
    </location>
</feature>
<feature type="repeat" description="Solcar 3">
    <location>
        <begin position="220"/>
        <end position="304"/>
    </location>
</feature>
<protein>
    <recommendedName>
        <fullName>Peroxisomal adenine nucleotide transporter 1</fullName>
    </recommendedName>
</protein>
<organism>
    <name type="scientific">Saccharomyces cerevisiae (strain ATCC 204508 / S288c)</name>
    <name type="common">Baker's yeast</name>
    <dbReference type="NCBI Taxonomy" id="559292"/>
    <lineage>
        <taxon>Eukaryota</taxon>
        <taxon>Fungi</taxon>
        <taxon>Dikarya</taxon>
        <taxon>Ascomycota</taxon>
        <taxon>Saccharomycotina</taxon>
        <taxon>Saccharomycetes</taxon>
        <taxon>Saccharomycetales</taxon>
        <taxon>Saccharomycetaceae</taxon>
        <taxon>Saccharomyces</taxon>
    </lineage>
</organism>
<name>ANT1_YEAST</name>
<gene>
    <name type="primary">ANT1</name>
    <name type="ordered locus">YPR128C</name>
</gene>